<name>OBG_SALPC</name>
<sequence>MKFVDEASILVVAGDGGNGCVSFRREKYIPKGGPDGGDGGDGGDVWMEADENLNTLIDYRFEKSFRAERGQNGASRDCTGKRGKDVTIKVPVGTRVIDQGTGETMGDMTKHGQRLLVAKGGWHGLGNTRFKSSVNRTPRQKTNGTPGDKRDLLLELMLLADVGMLGMPNAGKSTFIRAVSAAKPKVADYPFTTLVPSLGVVRMDSEKSFVVADIPGLIEGAAEGAGLGIRFLKHLERCRVLLHLIDIDPIDGSDPVENARIIIGELEKYSQDLAAKPRWLVFNKIDLMDKTEAEEKAKAIAEALGWEGKYYLISAASQLGVKDLCWDVMTFIIENPIAQAEEAKQPEKVEFMWDDYHRQQLAEVEEDADDDWDDDWDEDDEEGVEFIYKR</sequence>
<proteinExistence type="inferred from homology"/>
<comment type="function">
    <text evidence="1">An essential GTPase which binds GTP, GDP and possibly (p)ppGpp with moderate affinity, with high nucleotide exchange rates and a fairly low GTP hydrolysis rate. Plays a role in control of the cell cycle, stress response, ribosome biogenesis and in those bacteria that undergo differentiation, in morphogenesis control.</text>
</comment>
<comment type="cofactor">
    <cofactor evidence="1">
        <name>Mg(2+)</name>
        <dbReference type="ChEBI" id="CHEBI:18420"/>
    </cofactor>
</comment>
<comment type="subunit">
    <text evidence="1">Monomer.</text>
</comment>
<comment type="subcellular location">
    <subcellularLocation>
        <location evidence="1">Cytoplasm</location>
    </subcellularLocation>
</comment>
<comment type="similarity">
    <text evidence="1">Belongs to the TRAFAC class OBG-HflX-like GTPase superfamily. OBG GTPase family.</text>
</comment>
<dbReference type="EC" id="3.6.5.-" evidence="1"/>
<dbReference type="EMBL" id="CP000857">
    <property type="protein sequence ID" value="ACN47455.1"/>
    <property type="molecule type" value="Genomic_DNA"/>
</dbReference>
<dbReference type="SMR" id="C0PZJ5"/>
<dbReference type="KEGG" id="sei:SPC_3370"/>
<dbReference type="HOGENOM" id="CLU_011747_2_0_6"/>
<dbReference type="Proteomes" id="UP000001599">
    <property type="component" value="Chromosome"/>
</dbReference>
<dbReference type="GO" id="GO:0005737">
    <property type="term" value="C:cytoplasm"/>
    <property type="evidence" value="ECO:0007669"/>
    <property type="project" value="UniProtKB-SubCell"/>
</dbReference>
<dbReference type="GO" id="GO:0005525">
    <property type="term" value="F:GTP binding"/>
    <property type="evidence" value="ECO:0007669"/>
    <property type="project" value="UniProtKB-UniRule"/>
</dbReference>
<dbReference type="GO" id="GO:0003924">
    <property type="term" value="F:GTPase activity"/>
    <property type="evidence" value="ECO:0007669"/>
    <property type="project" value="UniProtKB-UniRule"/>
</dbReference>
<dbReference type="GO" id="GO:0000287">
    <property type="term" value="F:magnesium ion binding"/>
    <property type="evidence" value="ECO:0007669"/>
    <property type="project" value="InterPro"/>
</dbReference>
<dbReference type="GO" id="GO:0042254">
    <property type="term" value="P:ribosome biogenesis"/>
    <property type="evidence" value="ECO:0007669"/>
    <property type="project" value="UniProtKB-UniRule"/>
</dbReference>
<dbReference type="CDD" id="cd01898">
    <property type="entry name" value="Obg"/>
    <property type="match status" value="1"/>
</dbReference>
<dbReference type="FunFam" id="2.70.210.12:FF:000001">
    <property type="entry name" value="GTPase Obg"/>
    <property type="match status" value="1"/>
</dbReference>
<dbReference type="FunFam" id="3.40.50.300:FF:000185">
    <property type="entry name" value="GTPase Obg"/>
    <property type="match status" value="1"/>
</dbReference>
<dbReference type="Gene3D" id="2.70.210.12">
    <property type="entry name" value="GTP1/OBG domain"/>
    <property type="match status" value="1"/>
</dbReference>
<dbReference type="Gene3D" id="3.40.50.300">
    <property type="entry name" value="P-loop containing nucleotide triphosphate hydrolases"/>
    <property type="match status" value="1"/>
</dbReference>
<dbReference type="HAMAP" id="MF_01454">
    <property type="entry name" value="GTPase_Obg"/>
    <property type="match status" value="1"/>
</dbReference>
<dbReference type="InterPro" id="IPR031167">
    <property type="entry name" value="G_OBG"/>
</dbReference>
<dbReference type="InterPro" id="IPR006073">
    <property type="entry name" value="GTP-bd"/>
</dbReference>
<dbReference type="InterPro" id="IPR014100">
    <property type="entry name" value="GTP-bd_Obg/CgtA"/>
</dbReference>
<dbReference type="InterPro" id="IPR006074">
    <property type="entry name" value="GTP1-OBG_CS"/>
</dbReference>
<dbReference type="InterPro" id="IPR006169">
    <property type="entry name" value="GTP1_OBG_dom"/>
</dbReference>
<dbReference type="InterPro" id="IPR036726">
    <property type="entry name" value="GTP1_OBG_dom_sf"/>
</dbReference>
<dbReference type="InterPro" id="IPR045086">
    <property type="entry name" value="OBG_GTPase"/>
</dbReference>
<dbReference type="InterPro" id="IPR027417">
    <property type="entry name" value="P-loop_NTPase"/>
</dbReference>
<dbReference type="NCBIfam" id="TIGR02729">
    <property type="entry name" value="Obg_CgtA"/>
    <property type="match status" value="1"/>
</dbReference>
<dbReference type="NCBIfam" id="NF008955">
    <property type="entry name" value="PRK12297.1"/>
    <property type="match status" value="1"/>
</dbReference>
<dbReference type="NCBIfam" id="NF008956">
    <property type="entry name" value="PRK12299.1"/>
    <property type="match status" value="1"/>
</dbReference>
<dbReference type="PANTHER" id="PTHR11702">
    <property type="entry name" value="DEVELOPMENTALLY REGULATED GTP-BINDING PROTEIN-RELATED"/>
    <property type="match status" value="1"/>
</dbReference>
<dbReference type="PANTHER" id="PTHR11702:SF31">
    <property type="entry name" value="MITOCHONDRIAL RIBOSOME-ASSOCIATED GTPASE 2"/>
    <property type="match status" value="1"/>
</dbReference>
<dbReference type="Pfam" id="PF01018">
    <property type="entry name" value="GTP1_OBG"/>
    <property type="match status" value="1"/>
</dbReference>
<dbReference type="Pfam" id="PF01926">
    <property type="entry name" value="MMR_HSR1"/>
    <property type="match status" value="1"/>
</dbReference>
<dbReference type="PIRSF" id="PIRSF002401">
    <property type="entry name" value="GTP_bd_Obg/CgtA"/>
    <property type="match status" value="1"/>
</dbReference>
<dbReference type="PRINTS" id="PR00326">
    <property type="entry name" value="GTP1OBG"/>
</dbReference>
<dbReference type="SUPFAM" id="SSF82051">
    <property type="entry name" value="Obg GTP-binding protein N-terminal domain"/>
    <property type="match status" value="1"/>
</dbReference>
<dbReference type="SUPFAM" id="SSF52540">
    <property type="entry name" value="P-loop containing nucleoside triphosphate hydrolases"/>
    <property type="match status" value="1"/>
</dbReference>
<dbReference type="PROSITE" id="PS51710">
    <property type="entry name" value="G_OBG"/>
    <property type="match status" value="1"/>
</dbReference>
<dbReference type="PROSITE" id="PS00905">
    <property type="entry name" value="GTP1_OBG"/>
    <property type="match status" value="1"/>
</dbReference>
<dbReference type="PROSITE" id="PS51883">
    <property type="entry name" value="OBG"/>
    <property type="match status" value="1"/>
</dbReference>
<protein>
    <recommendedName>
        <fullName evidence="1">GTPase Obg</fullName>
        <ecNumber evidence="1">3.6.5.-</ecNumber>
    </recommendedName>
    <alternativeName>
        <fullName evidence="1">GTP-binding protein Obg</fullName>
    </alternativeName>
</protein>
<evidence type="ECO:0000255" key="1">
    <source>
        <dbReference type="HAMAP-Rule" id="MF_01454"/>
    </source>
</evidence>
<evidence type="ECO:0000255" key="2">
    <source>
        <dbReference type="PROSITE-ProRule" id="PRU01231"/>
    </source>
</evidence>
<evidence type="ECO:0000256" key="3">
    <source>
        <dbReference type="SAM" id="MobiDB-lite"/>
    </source>
</evidence>
<organism>
    <name type="scientific">Salmonella paratyphi C (strain RKS4594)</name>
    <dbReference type="NCBI Taxonomy" id="476213"/>
    <lineage>
        <taxon>Bacteria</taxon>
        <taxon>Pseudomonadati</taxon>
        <taxon>Pseudomonadota</taxon>
        <taxon>Gammaproteobacteria</taxon>
        <taxon>Enterobacterales</taxon>
        <taxon>Enterobacteriaceae</taxon>
        <taxon>Salmonella</taxon>
    </lineage>
</organism>
<keyword id="KW-0963">Cytoplasm</keyword>
<keyword id="KW-0342">GTP-binding</keyword>
<keyword id="KW-0378">Hydrolase</keyword>
<keyword id="KW-0460">Magnesium</keyword>
<keyword id="KW-0479">Metal-binding</keyword>
<keyword id="KW-0547">Nucleotide-binding</keyword>
<reference key="1">
    <citation type="journal article" date="2009" name="PLoS ONE">
        <title>Salmonella paratyphi C: genetic divergence from Salmonella choleraesuis and pathogenic convergence with Salmonella typhi.</title>
        <authorList>
            <person name="Liu W.-Q."/>
            <person name="Feng Y."/>
            <person name="Wang Y."/>
            <person name="Zou Q.-H."/>
            <person name="Chen F."/>
            <person name="Guo J.-T."/>
            <person name="Peng Y.-H."/>
            <person name="Jin Y."/>
            <person name="Li Y.-G."/>
            <person name="Hu S.-N."/>
            <person name="Johnston R.N."/>
            <person name="Liu G.-R."/>
            <person name="Liu S.-L."/>
        </authorList>
    </citation>
    <scope>NUCLEOTIDE SEQUENCE [LARGE SCALE GENOMIC DNA]</scope>
    <source>
        <strain>RKS4594</strain>
    </source>
</reference>
<gene>
    <name evidence="1" type="primary">obg</name>
    <name type="ordered locus">SPC_3370</name>
</gene>
<accession>C0PZJ5</accession>
<feature type="chain" id="PRO_0000386230" description="GTPase Obg">
    <location>
        <begin position="1"/>
        <end position="390"/>
    </location>
</feature>
<feature type="domain" description="Obg" evidence="2">
    <location>
        <begin position="1"/>
        <end position="159"/>
    </location>
</feature>
<feature type="domain" description="OBG-type G" evidence="1">
    <location>
        <begin position="160"/>
        <end position="333"/>
    </location>
</feature>
<feature type="region of interest" description="Disordered" evidence="3">
    <location>
        <begin position="127"/>
        <end position="147"/>
    </location>
</feature>
<feature type="compositionally biased region" description="Polar residues" evidence="3">
    <location>
        <begin position="129"/>
        <end position="145"/>
    </location>
</feature>
<feature type="binding site" evidence="1">
    <location>
        <begin position="166"/>
        <end position="173"/>
    </location>
    <ligand>
        <name>GTP</name>
        <dbReference type="ChEBI" id="CHEBI:37565"/>
    </ligand>
</feature>
<feature type="binding site" evidence="1">
    <location>
        <position position="173"/>
    </location>
    <ligand>
        <name>Mg(2+)</name>
        <dbReference type="ChEBI" id="CHEBI:18420"/>
    </ligand>
</feature>
<feature type="binding site" evidence="1">
    <location>
        <begin position="191"/>
        <end position="195"/>
    </location>
    <ligand>
        <name>GTP</name>
        <dbReference type="ChEBI" id="CHEBI:37565"/>
    </ligand>
</feature>
<feature type="binding site" evidence="1">
    <location>
        <position position="193"/>
    </location>
    <ligand>
        <name>Mg(2+)</name>
        <dbReference type="ChEBI" id="CHEBI:18420"/>
    </ligand>
</feature>
<feature type="binding site" evidence="1">
    <location>
        <begin position="213"/>
        <end position="216"/>
    </location>
    <ligand>
        <name>GTP</name>
        <dbReference type="ChEBI" id="CHEBI:37565"/>
    </ligand>
</feature>
<feature type="binding site" evidence="1">
    <location>
        <begin position="283"/>
        <end position="286"/>
    </location>
    <ligand>
        <name>GTP</name>
        <dbReference type="ChEBI" id="CHEBI:37565"/>
    </ligand>
</feature>
<feature type="binding site" evidence="1">
    <location>
        <begin position="314"/>
        <end position="316"/>
    </location>
    <ligand>
        <name>GTP</name>
        <dbReference type="ChEBI" id="CHEBI:37565"/>
    </ligand>
</feature>